<sequence>MTVMKFDLIKKEGKARRGKITFPRGDIQTPAFMPVGTYGAVKSLSPVELKEMGAEIILGNTFHLWLRPGTEIIKKHGSLHGFNGWDKPILTDSGGFQVFSLGKMRKLTEEGVTFKSPINSSKVFLSPEISMQVQRDLGSDIVMCFDECTPYPATEKEAKESMELSMRWAKRSKEAHGDNPSALFGIIQGGMYEHLRDESLAKLKEIDFDGFAIGGLSVGEPKEDMIRILDHTAHQMPEDKPRYLMGVGTPKDLVEAVYRGVDMFDCVMPSRNARNGHIFTSEGVIKIRNSKYKDDTSPLDPNCDCYTCKNFTKSYLHHLDKTKEILGSRLNTIHNLTFYQNLMKSIRKALDEGRFSEFRKEFLASYK</sequence>
<evidence type="ECO:0000255" key="1">
    <source>
        <dbReference type="HAMAP-Rule" id="MF_00168"/>
    </source>
</evidence>
<feature type="chain" id="PRO_1000016795" description="Queuine tRNA-ribosyltransferase">
    <location>
        <begin position="1"/>
        <end position="367"/>
    </location>
</feature>
<feature type="region of interest" description="RNA binding" evidence="1">
    <location>
        <begin position="246"/>
        <end position="252"/>
    </location>
</feature>
<feature type="active site" description="Proton acceptor" evidence="1">
    <location>
        <position position="92"/>
    </location>
</feature>
<feature type="active site" description="Nucleophile" evidence="1">
    <location>
        <position position="265"/>
    </location>
</feature>
<feature type="binding site" evidence="1">
    <location>
        <begin position="92"/>
        <end position="96"/>
    </location>
    <ligand>
        <name>substrate</name>
    </ligand>
</feature>
<feature type="binding site" evidence="1">
    <location>
        <position position="146"/>
    </location>
    <ligand>
        <name>substrate</name>
    </ligand>
</feature>
<feature type="binding site" evidence="1">
    <location>
        <position position="188"/>
    </location>
    <ligand>
        <name>substrate</name>
    </ligand>
</feature>
<feature type="binding site" evidence="1">
    <location>
        <position position="215"/>
    </location>
    <ligand>
        <name>substrate</name>
    </ligand>
</feature>
<feature type="binding site" evidence="1">
    <location>
        <position position="303"/>
    </location>
    <ligand>
        <name>Zn(2+)</name>
        <dbReference type="ChEBI" id="CHEBI:29105"/>
    </ligand>
</feature>
<feature type="binding site" evidence="1">
    <location>
        <position position="305"/>
    </location>
    <ligand>
        <name>Zn(2+)</name>
        <dbReference type="ChEBI" id="CHEBI:29105"/>
    </ligand>
</feature>
<feature type="binding site" evidence="1">
    <location>
        <position position="308"/>
    </location>
    <ligand>
        <name>Zn(2+)</name>
        <dbReference type="ChEBI" id="CHEBI:29105"/>
    </ligand>
</feature>
<feature type="binding site" evidence="1">
    <location>
        <position position="334"/>
    </location>
    <ligand>
        <name>Zn(2+)</name>
        <dbReference type="ChEBI" id="CHEBI:29105"/>
    </ligand>
</feature>
<protein>
    <recommendedName>
        <fullName evidence="1">Queuine tRNA-ribosyltransferase</fullName>
        <ecNumber evidence="1">2.4.2.29</ecNumber>
    </recommendedName>
    <alternativeName>
        <fullName evidence="1">Guanine insertion enzyme</fullName>
    </alternativeName>
    <alternativeName>
        <fullName evidence="1">tRNA-guanine transglycosylase</fullName>
    </alternativeName>
</protein>
<accession>A4IYF8</accession>
<name>TGT_FRATW</name>
<proteinExistence type="inferred from homology"/>
<reference key="1">
    <citation type="journal article" date="2007" name="PLoS ONE">
        <title>Complete genomic characterization of a pathogenic A.II strain of Francisella tularensis subspecies tularensis.</title>
        <authorList>
            <person name="Beckstrom-Sternberg S.M."/>
            <person name="Auerbach R.K."/>
            <person name="Godbole S."/>
            <person name="Pearson J.V."/>
            <person name="Beckstrom-Sternberg J.S."/>
            <person name="Deng Z."/>
            <person name="Munk C."/>
            <person name="Kubota K."/>
            <person name="Zhou Y."/>
            <person name="Bruce D."/>
            <person name="Noronha J."/>
            <person name="Scheuermann R.H."/>
            <person name="Wang A."/>
            <person name="Wei X."/>
            <person name="Wang J."/>
            <person name="Hao J."/>
            <person name="Wagner D.M."/>
            <person name="Brettin T.S."/>
            <person name="Brown N."/>
            <person name="Gilna P."/>
            <person name="Keim P.S."/>
        </authorList>
    </citation>
    <scope>NUCLEOTIDE SEQUENCE [LARGE SCALE GENOMIC DNA]</scope>
    <source>
        <strain>WY96-3418</strain>
    </source>
</reference>
<gene>
    <name evidence="1" type="primary">tgt</name>
    <name type="ordered locus">FTW_1153</name>
</gene>
<comment type="function">
    <text evidence="1">Catalyzes the base-exchange of a guanine (G) residue with the queuine precursor 7-aminomethyl-7-deazaguanine (PreQ1) at position 34 (anticodon wobble position) in tRNAs with GU(N) anticodons (tRNA-Asp, -Asn, -His and -Tyr). Catalysis occurs through a double-displacement mechanism. The nucleophile active site attacks the C1' of nucleotide 34 to detach the guanine base from the RNA, forming a covalent enzyme-RNA intermediate. The proton acceptor active site deprotonates the incoming PreQ1, allowing a nucleophilic attack on the C1' of the ribose to form the product. After dissociation, two additional enzymatic reactions on the tRNA convert PreQ1 to queuine (Q), resulting in the hypermodified nucleoside queuosine (7-(((4,5-cis-dihydroxy-2-cyclopenten-1-yl)amino)methyl)-7-deazaguanosine).</text>
</comment>
<comment type="catalytic activity">
    <reaction evidence="1">
        <text>7-aminomethyl-7-carbaguanine + guanosine(34) in tRNA = 7-aminomethyl-7-carbaguanosine(34) in tRNA + guanine</text>
        <dbReference type="Rhea" id="RHEA:24104"/>
        <dbReference type="Rhea" id="RHEA-COMP:10341"/>
        <dbReference type="Rhea" id="RHEA-COMP:10342"/>
        <dbReference type="ChEBI" id="CHEBI:16235"/>
        <dbReference type="ChEBI" id="CHEBI:58703"/>
        <dbReference type="ChEBI" id="CHEBI:74269"/>
        <dbReference type="ChEBI" id="CHEBI:82833"/>
        <dbReference type="EC" id="2.4.2.29"/>
    </reaction>
</comment>
<comment type="cofactor">
    <cofactor evidence="1">
        <name>Zn(2+)</name>
        <dbReference type="ChEBI" id="CHEBI:29105"/>
    </cofactor>
    <text evidence="1">Binds 1 zinc ion per subunit.</text>
</comment>
<comment type="pathway">
    <text evidence="1">tRNA modification; tRNA-queuosine biosynthesis.</text>
</comment>
<comment type="subunit">
    <text evidence="1">Homodimer. Within each dimer, one monomer is responsible for RNA recognition and catalysis, while the other monomer binds to the replacement base PreQ1.</text>
</comment>
<comment type="similarity">
    <text evidence="1">Belongs to the queuine tRNA-ribosyltransferase family.</text>
</comment>
<keyword id="KW-0328">Glycosyltransferase</keyword>
<keyword id="KW-0479">Metal-binding</keyword>
<keyword id="KW-0671">Queuosine biosynthesis</keyword>
<keyword id="KW-0808">Transferase</keyword>
<keyword id="KW-0819">tRNA processing</keyword>
<keyword id="KW-0862">Zinc</keyword>
<dbReference type="EC" id="2.4.2.29" evidence="1"/>
<dbReference type="EMBL" id="CP000608">
    <property type="protein sequence ID" value="ABO46959.1"/>
    <property type="molecule type" value="Genomic_DNA"/>
</dbReference>
<dbReference type="RefSeq" id="WP_003021291.1">
    <property type="nucleotide sequence ID" value="NC_009257.1"/>
</dbReference>
<dbReference type="SMR" id="A4IYF8"/>
<dbReference type="KEGG" id="ftw:FTW_1153"/>
<dbReference type="HOGENOM" id="CLU_022060_0_1_6"/>
<dbReference type="UniPathway" id="UPA00392"/>
<dbReference type="GO" id="GO:0005829">
    <property type="term" value="C:cytosol"/>
    <property type="evidence" value="ECO:0007669"/>
    <property type="project" value="TreeGrafter"/>
</dbReference>
<dbReference type="GO" id="GO:0046872">
    <property type="term" value="F:metal ion binding"/>
    <property type="evidence" value="ECO:0007669"/>
    <property type="project" value="UniProtKB-KW"/>
</dbReference>
<dbReference type="GO" id="GO:0008479">
    <property type="term" value="F:tRNA-guanosine(34) queuine transglycosylase activity"/>
    <property type="evidence" value="ECO:0007669"/>
    <property type="project" value="UniProtKB-UniRule"/>
</dbReference>
<dbReference type="GO" id="GO:0008616">
    <property type="term" value="P:queuosine biosynthetic process"/>
    <property type="evidence" value="ECO:0007669"/>
    <property type="project" value="UniProtKB-UniRule"/>
</dbReference>
<dbReference type="GO" id="GO:0002099">
    <property type="term" value="P:tRNA wobble guanine modification"/>
    <property type="evidence" value="ECO:0007669"/>
    <property type="project" value="TreeGrafter"/>
</dbReference>
<dbReference type="GO" id="GO:0101030">
    <property type="term" value="P:tRNA-guanine transglycosylation"/>
    <property type="evidence" value="ECO:0007669"/>
    <property type="project" value="InterPro"/>
</dbReference>
<dbReference type="FunFam" id="3.20.20.105:FF:000001">
    <property type="entry name" value="Queuine tRNA-ribosyltransferase"/>
    <property type="match status" value="1"/>
</dbReference>
<dbReference type="Gene3D" id="3.20.20.105">
    <property type="entry name" value="Queuine tRNA-ribosyltransferase-like"/>
    <property type="match status" value="1"/>
</dbReference>
<dbReference type="HAMAP" id="MF_00168">
    <property type="entry name" value="Q_tRNA_Tgt"/>
    <property type="match status" value="1"/>
</dbReference>
<dbReference type="InterPro" id="IPR050076">
    <property type="entry name" value="ArchSynthase1/Queuine_TRR"/>
</dbReference>
<dbReference type="InterPro" id="IPR004803">
    <property type="entry name" value="TGT"/>
</dbReference>
<dbReference type="InterPro" id="IPR036511">
    <property type="entry name" value="TGT-like_sf"/>
</dbReference>
<dbReference type="InterPro" id="IPR002616">
    <property type="entry name" value="tRNA_ribo_trans-like"/>
</dbReference>
<dbReference type="NCBIfam" id="TIGR00430">
    <property type="entry name" value="Q_tRNA_tgt"/>
    <property type="match status" value="1"/>
</dbReference>
<dbReference type="NCBIfam" id="TIGR00449">
    <property type="entry name" value="tgt_general"/>
    <property type="match status" value="1"/>
</dbReference>
<dbReference type="PANTHER" id="PTHR46499">
    <property type="entry name" value="QUEUINE TRNA-RIBOSYLTRANSFERASE"/>
    <property type="match status" value="1"/>
</dbReference>
<dbReference type="PANTHER" id="PTHR46499:SF1">
    <property type="entry name" value="QUEUINE TRNA-RIBOSYLTRANSFERASE"/>
    <property type="match status" value="1"/>
</dbReference>
<dbReference type="Pfam" id="PF01702">
    <property type="entry name" value="TGT"/>
    <property type="match status" value="1"/>
</dbReference>
<dbReference type="SUPFAM" id="SSF51713">
    <property type="entry name" value="tRNA-guanine transglycosylase"/>
    <property type="match status" value="1"/>
</dbReference>
<organism>
    <name type="scientific">Francisella tularensis subsp. tularensis (strain WY96-3418)</name>
    <dbReference type="NCBI Taxonomy" id="418136"/>
    <lineage>
        <taxon>Bacteria</taxon>
        <taxon>Pseudomonadati</taxon>
        <taxon>Pseudomonadota</taxon>
        <taxon>Gammaproteobacteria</taxon>
        <taxon>Thiotrichales</taxon>
        <taxon>Francisellaceae</taxon>
        <taxon>Francisella</taxon>
    </lineage>
</organism>